<sequence>MASSRVDTINLRIWLVSIICAALSFINVTVHLIAINFPNLGFPCAYFEINDLKAVNLSANNEIYQMTHQLYINPVQIICYVLIMAILFLLIIIYYIVCCAKVFSSNKTSNVNQTTRDITWMGDTSSCFQFILIMDTFQLFVTALSFRLVALGAFAYSIFFVCFTTFNVTLITQFQSADKSFFAFQKIHPNLKGTVQFKTVVINLSELMLGYSTMFLGITTCLGVGNSIYIRSITVAFSSINTFLVMACIYSIVIEAVLVRYVKPLFGYYVGMFCGAVGLSFPILQYETFFESEWSTGLIINLSVVAIISIGFIICRLVRYLVKKKRRYKQLLNAESSSLMDENE</sequence>
<feature type="chain" id="PRO_0000115780" description="Envelope glycoprotein M">
    <location>
        <begin position="1"/>
        <end position="344"/>
    </location>
</feature>
<feature type="topological domain" description="Intravirion" evidence="1">
    <location>
        <begin position="1"/>
        <end position="12"/>
    </location>
</feature>
<feature type="transmembrane region" description="Helical" evidence="1">
    <location>
        <begin position="13"/>
        <end position="33"/>
    </location>
</feature>
<feature type="topological domain" description="Virion surface" evidence="1">
    <location>
        <begin position="34"/>
        <end position="76"/>
    </location>
</feature>
<feature type="transmembrane region" description="Helical" evidence="1">
    <location>
        <begin position="77"/>
        <end position="97"/>
    </location>
</feature>
<feature type="topological domain" description="Intravirion" evidence="1">
    <location>
        <begin position="98"/>
        <end position="125"/>
    </location>
</feature>
<feature type="transmembrane region" description="Helical" evidence="1">
    <location>
        <begin position="126"/>
        <end position="146"/>
    </location>
</feature>
<feature type="topological domain" description="Virion surface" evidence="1">
    <location>
        <position position="147"/>
    </location>
</feature>
<feature type="transmembrane region" description="Helical" evidence="1">
    <location>
        <begin position="148"/>
        <end position="168"/>
    </location>
</feature>
<feature type="topological domain" description="Intravirion" evidence="1">
    <location>
        <begin position="169"/>
        <end position="203"/>
    </location>
</feature>
<feature type="transmembrane region" description="Helical" evidence="1">
    <location>
        <begin position="204"/>
        <end position="224"/>
    </location>
</feature>
<feature type="topological domain" description="Virion surface" evidence="1">
    <location>
        <begin position="225"/>
        <end position="238"/>
    </location>
</feature>
<feature type="transmembrane region" description="Helical" evidence="1">
    <location>
        <begin position="239"/>
        <end position="259"/>
    </location>
</feature>
<feature type="topological domain" description="Intravirion" evidence="1">
    <location>
        <begin position="260"/>
        <end position="263"/>
    </location>
</feature>
<feature type="transmembrane region" description="Helical" evidence="1">
    <location>
        <begin position="264"/>
        <end position="284"/>
    </location>
</feature>
<feature type="topological domain" description="Virion surface" evidence="1">
    <location>
        <begin position="285"/>
        <end position="293"/>
    </location>
</feature>
<feature type="transmembrane region" description="Helical" evidence="1">
    <location>
        <begin position="294"/>
        <end position="314"/>
    </location>
</feature>
<feature type="topological domain" description="Intravirion" evidence="1">
    <location>
        <begin position="315"/>
        <end position="344"/>
    </location>
</feature>
<feature type="disulfide bond" description="Interchain (with gN)" evidence="1">
    <location>
        <position position="44"/>
    </location>
</feature>
<protein>
    <recommendedName>
        <fullName evidence="1">Envelope glycoprotein M</fullName>
        <shortName evidence="1">gM</shortName>
    </recommendedName>
</protein>
<evidence type="ECO:0000255" key="1">
    <source>
        <dbReference type="HAMAP-Rule" id="MF_04035"/>
    </source>
</evidence>
<keyword id="KW-1015">Disulfide bond</keyword>
<keyword id="KW-0325">Glycoprotein</keyword>
<keyword id="KW-1039">Host endosome</keyword>
<keyword id="KW-1040">Host Golgi apparatus</keyword>
<keyword id="KW-1043">Host membrane</keyword>
<keyword id="KW-1048">Host nucleus</keyword>
<keyword id="KW-0472">Membrane</keyword>
<keyword id="KW-1185">Reference proteome</keyword>
<keyword id="KW-0812">Transmembrane</keyword>
<keyword id="KW-1133">Transmembrane helix</keyword>
<keyword id="KW-0261">Viral envelope protein</keyword>
<keyword id="KW-0946">Virion</keyword>
<accession>P52449</accession>
<proteinExistence type="inferred from homology"/>
<organismHost>
    <name type="scientific">Homo sapiens</name>
    <name type="common">Human</name>
    <dbReference type="NCBI Taxonomy" id="9606"/>
</organismHost>
<comment type="function">
    <text evidence="1">Envelope glycoprotein important for virion assembly and egress. Plays a role in the correct incorporation of gH-gL into virion membrane. Directs the glycoprotein N (gN) to the host trans-Golgi network.</text>
</comment>
<comment type="subunit">
    <text evidence="1">Interacts (via N-terminus) with gN (via N-terminus). The gM-gN heterodimer forms the gCII complex.</text>
</comment>
<comment type="subcellular location">
    <subcellularLocation>
        <location evidence="1">Virion membrane</location>
        <topology evidence="1">Multi-pass membrane protein</topology>
    </subcellularLocation>
    <subcellularLocation>
        <location evidence="1">Host Golgi apparatus</location>
        <location evidence="1">Host trans-Golgi network</location>
    </subcellularLocation>
    <subcellularLocation>
        <location evidence="1">Host endosome membrane</location>
        <topology evidence="1">Multi-pass membrane protein</topology>
    </subcellularLocation>
    <subcellularLocation>
        <location evidence="1">Host nucleus inner membrane</location>
        <topology evidence="1">Multi-pass membrane protein</topology>
    </subcellularLocation>
    <text evidence="1">During virion morphogenesis, this protein accumulates in the trans-Golgi network where secondary envelopment occurs.</text>
</comment>
<comment type="similarity">
    <text evidence="1">Belongs to the herpesviridae glycoprotein M family.</text>
</comment>
<organism>
    <name type="scientific">Human herpesvirus 6B (strain Z29)</name>
    <name type="common">HHV-6 variant B</name>
    <name type="synonym">Human B lymphotropic virus</name>
    <dbReference type="NCBI Taxonomy" id="36351"/>
    <lineage>
        <taxon>Viruses</taxon>
        <taxon>Duplodnaviria</taxon>
        <taxon>Heunggongvirae</taxon>
        <taxon>Peploviricota</taxon>
        <taxon>Herviviricetes</taxon>
        <taxon>Herpesvirales</taxon>
        <taxon>Orthoherpesviridae</taxon>
        <taxon>Betaherpesvirinae</taxon>
        <taxon>Roseolovirus</taxon>
        <taxon>Roseolovirus humanbeta6b</taxon>
        <taxon>Human herpesvirus 6B</taxon>
    </lineage>
</organism>
<name>GM_HHV6Z</name>
<gene>
    <name evidence="1" type="primary">gM</name>
    <name type="ORF">CH5L</name>
    <name type="ORF">U72</name>
</gene>
<reference key="1">
    <citation type="journal article" date="1996" name="Arch. Virol.">
        <title>Restriction endonuclease mapping and molecular cloning of the human herpesvirus 6 variant B strain Z29 genome.</title>
        <authorList>
            <person name="Lindquester G.J."/>
            <person name="Inoue N."/>
            <person name="Allen R.D."/>
            <person name="Castelli J.W."/>
            <person name="Stamey F.R."/>
            <person name="Dambaugh T.R."/>
            <person name="O'Brian J.J."/>
            <person name="Danovich R.M."/>
            <person name="Frenkel N."/>
            <person name="Pellett P.E."/>
        </authorList>
    </citation>
    <scope>NUCLEOTIDE SEQUENCE [GENOMIC DNA]</scope>
</reference>
<reference key="2">
    <citation type="journal article" date="1999" name="J. Virol.">
        <title>Human herpesvirus 6B genome sequence: coding content and comparison with human herpesvirus 6A.</title>
        <authorList>
            <person name="Dominguez G."/>
            <person name="Dambaugh T.R."/>
            <person name="Stamey F.R."/>
            <person name="Dewhurst S."/>
            <person name="Inoue N."/>
            <person name="Pellett P.E."/>
        </authorList>
    </citation>
    <scope>NUCLEOTIDE SEQUENCE [LARGE SCALE GENOMIC DNA]</scope>
</reference>
<dbReference type="EMBL" id="AF157706">
    <property type="protein sequence ID" value="AAB06355.1"/>
    <property type="molecule type" value="Genomic_DNA"/>
</dbReference>
<dbReference type="PIR" id="T44032">
    <property type="entry name" value="T44032"/>
</dbReference>
<dbReference type="RefSeq" id="NP_050251.1">
    <property type="nucleotide sequence ID" value="NC_000898.1"/>
</dbReference>
<dbReference type="DNASU" id="1497072"/>
<dbReference type="GeneID" id="1497072"/>
<dbReference type="KEGG" id="vg:1497072"/>
<dbReference type="Proteomes" id="UP000006930">
    <property type="component" value="Segment"/>
</dbReference>
<dbReference type="GO" id="GO:0044175">
    <property type="term" value="C:host cell endosome membrane"/>
    <property type="evidence" value="ECO:0007669"/>
    <property type="project" value="UniProtKB-SubCell"/>
</dbReference>
<dbReference type="GO" id="GO:0044177">
    <property type="term" value="C:host cell Golgi apparatus"/>
    <property type="evidence" value="ECO:0007669"/>
    <property type="project" value="UniProtKB-SubCell"/>
</dbReference>
<dbReference type="GO" id="GO:0044201">
    <property type="term" value="C:host cell nuclear inner membrane"/>
    <property type="evidence" value="ECO:0007669"/>
    <property type="project" value="UniProtKB-SubCell"/>
</dbReference>
<dbReference type="GO" id="GO:0016020">
    <property type="term" value="C:membrane"/>
    <property type="evidence" value="ECO:0007669"/>
    <property type="project" value="UniProtKB-KW"/>
</dbReference>
<dbReference type="GO" id="GO:0019031">
    <property type="term" value="C:viral envelope"/>
    <property type="evidence" value="ECO:0007669"/>
    <property type="project" value="UniProtKB-KW"/>
</dbReference>
<dbReference type="GO" id="GO:0055036">
    <property type="term" value="C:virion membrane"/>
    <property type="evidence" value="ECO:0007669"/>
    <property type="project" value="UniProtKB-SubCell"/>
</dbReference>
<dbReference type="HAMAP" id="MF_04035">
    <property type="entry name" value="HSV_GM"/>
    <property type="match status" value="1"/>
</dbReference>
<dbReference type="InterPro" id="IPR000785">
    <property type="entry name" value="Herpes_glycop_M"/>
</dbReference>
<dbReference type="Pfam" id="PF01528">
    <property type="entry name" value="Herpes_glycop"/>
    <property type="match status" value="1"/>
</dbReference>
<dbReference type="PRINTS" id="PR00333">
    <property type="entry name" value="HSVINTEGRLMP"/>
</dbReference>